<dbReference type="EC" id="2.3.2.27" evidence="6"/>
<dbReference type="EMBL" id="L49433">
    <property type="protein sequence ID" value="AAC42078.1"/>
    <property type="molecule type" value="mRNA"/>
</dbReference>
<dbReference type="EMBL" id="U88909">
    <property type="protein sequence ID" value="AAC53532.1"/>
    <property type="molecule type" value="mRNA"/>
</dbReference>
<dbReference type="EMBL" id="BC145985">
    <property type="protein sequence ID" value="AAI45986.1"/>
    <property type="molecule type" value="mRNA"/>
</dbReference>
<dbReference type="CCDS" id="CCDS22811.1"/>
<dbReference type="RefSeq" id="NP_001278432.1">
    <property type="nucleotide sequence ID" value="NM_001291503.2"/>
</dbReference>
<dbReference type="RefSeq" id="NP_031491.2">
    <property type="nucleotide sequence ID" value="NM_007465.4"/>
</dbReference>
<dbReference type="RefSeq" id="XP_017168599.1">
    <property type="nucleotide sequence ID" value="XM_017313110.2"/>
</dbReference>
<dbReference type="SMR" id="Q62210"/>
<dbReference type="BioGRID" id="198148">
    <property type="interactions" value="17"/>
</dbReference>
<dbReference type="CORUM" id="Q62210"/>
<dbReference type="FunCoup" id="Q62210">
    <property type="interactions" value="2643"/>
</dbReference>
<dbReference type="IntAct" id="Q62210">
    <property type="interactions" value="3"/>
</dbReference>
<dbReference type="MINT" id="Q62210"/>
<dbReference type="STRING" id="10090.ENSMUSP00000140049"/>
<dbReference type="MEROPS" id="I32.002"/>
<dbReference type="MEROPS" id="I32.007"/>
<dbReference type="iPTMnet" id="Q62210"/>
<dbReference type="PhosphoSitePlus" id="Q62210"/>
<dbReference type="SwissPalm" id="Q62210"/>
<dbReference type="jPOST" id="Q62210"/>
<dbReference type="PaxDb" id="10090-ENSMUSP00000140049"/>
<dbReference type="ProteomicsDB" id="273617"/>
<dbReference type="Pumba" id="Q62210"/>
<dbReference type="Antibodypedia" id="1043">
    <property type="antibodies" value="473 antibodies from 41 providers"/>
</dbReference>
<dbReference type="DNASU" id="11797"/>
<dbReference type="Ensembl" id="ENSMUST00000074246.7">
    <property type="protein sequence ID" value="ENSMUSP00000091422.5"/>
    <property type="gene ID" value="ENSMUSG00000057367.13"/>
</dbReference>
<dbReference type="Ensembl" id="ENSMUST00000190341.7">
    <property type="protein sequence ID" value="ENSMUSP00000140049.2"/>
    <property type="gene ID" value="ENSMUSG00000057367.13"/>
</dbReference>
<dbReference type="GeneID" id="11797"/>
<dbReference type="KEGG" id="mmu:11797"/>
<dbReference type="UCSC" id="uc009ocz.2">
    <property type="organism name" value="mouse"/>
</dbReference>
<dbReference type="AGR" id="MGI:1197009"/>
<dbReference type="CTD" id="329"/>
<dbReference type="MGI" id="MGI:1197009">
    <property type="gene designation" value="Birc2"/>
</dbReference>
<dbReference type="VEuPathDB" id="HostDB:ENSMUSG00000057367"/>
<dbReference type="eggNOG" id="KOG1101">
    <property type="taxonomic scope" value="Eukaryota"/>
</dbReference>
<dbReference type="GeneTree" id="ENSGT00940000154175"/>
<dbReference type="HOGENOM" id="CLU_016347_1_1_1"/>
<dbReference type="InParanoid" id="Q62210"/>
<dbReference type="OMA" id="TAMDEPW"/>
<dbReference type="OrthoDB" id="4034597at2759"/>
<dbReference type="PhylomeDB" id="Q62210"/>
<dbReference type="TreeFam" id="TF105356"/>
<dbReference type="Reactome" id="R-MMU-111465">
    <property type="pathway name" value="Apoptotic cleavage of cellular proteins"/>
</dbReference>
<dbReference type="Reactome" id="R-MMU-168638">
    <property type="pathway name" value="NOD1/2 Signaling Pathway"/>
</dbReference>
<dbReference type="Reactome" id="R-MMU-5357786">
    <property type="pathway name" value="TNFR1-induced proapoptotic signaling"/>
</dbReference>
<dbReference type="Reactome" id="R-MMU-5357905">
    <property type="pathway name" value="Regulation of TNFR1 signaling"/>
</dbReference>
<dbReference type="Reactome" id="R-MMU-5357956">
    <property type="pathway name" value="TNFR1-induced NF-kappa-B signaling pathway"/>
</dbReference>
<dbReference type="Reactome" id="R-MMU-5668541">
    <property type="pathway name" value="TNFR2 non-canonical NF-kB pathway"/>
</dbReference>
<dbReference type="Reactome" id="R-MMU-5675482">
    <property type="pathway name" value="Regulation of necroptotic cell death"/>
</dbReference>
<dbReference type="Reactome" id="R-MMU-5676594">
    <property type="pathway name" value="TNF receptor superfamily (TNFSF) members mediating non-canonical NF-kB pathway"/>
</dbReference>
<dbReference type="Reactome" id="R-MMU-5689880">
    <property type="pathway name" value="Ub-specific processing proteases"/>
</dbReference>
<dbReference type="Reactome" id="R-MMU-937041">
    <property type="pathway name" value="IKK complex recruitment mediated by RIP1"/>
</dbReference>
<dbReference type="BioGRID-ORCS" id="11797">
    <property type="hits" value="9 hits in 82 CRISPR screens"/>
</dbReference>
<dbReference type="ChiTaRS" id="Birc2">
    <property type="organism name" value="mouse"/>
</dbReference>
<dbReference type="PRO" id="PR:Q62210"/>
<dbReference type="Proteomes" id="UP000000589">
    <property type="component" value="Chromosome 9"/>
</dbReference>
<dbReference type="RNAct" id="Q62210">
    <property type="molecule type" value="protein"/>
</dbReference>
<dbReference type="Bgee" id="ENSMUSG00000057367">
    <property type="expression patterns" value="Expressed in spermatocyte and 280 other cell types or tissues"/>
</dbReference>
<dbReference type="ExpressionAtlas" id="Q62210">
    <property type="expression patterns" value="baseline and differential"/>
</dbReference>
<dbReference type="GO" id="GO:0035631">
    <property type="term" value="C:CD40 receptor complex"/>
    <property type="evidence" value="ECO:0000314"/>
    <property type="project" value="BHF-UCL"/>
</dbReference>
<dbReference type="GO" id="GO:0005737">
    <property type="term" value="C:cytoplasm"/>
    <property type="evidence" value="ECO:0007669"/>
    <property type="project" value="UniProtKB-SubCell"/>
</dbReference>
<dbReference type="GO" id="GO:0009898">
    <property type="term" value="C:cytoplasmic side of plasma membrane"/>
    <property type="evidence" value="ECO:0000314"/>
    <property type="project" value="BHF-UCL"/>
</dbReference>
<dbReference type="GO" id="GO:0005634">
    <property type="term" value="C:nucleus"/>
    <property type="evidence" value="ECO:0000250"/>
    <property type="project" value="UniProtKB"/>
</dbReference>
<dbReference type="GO" id="GO:0001741">
    <property type="term" value="C:XY body"/>
    <property type="evidence" value="ECO:0007669"/>
    <property type="project" value="Ensembl"/>
</dbReference>
<dbReference type="GO" id="GO:0098770">
    <property type="term" value="F:FBXO family protein binding"/>
    <property type="evidence" value="ECO:0007669"/>
    <property type="project" value="Ensembl"/>
</dbReference>
<dbReference type="GO" id="GO:0042802">
    <property type="term" value="F:identical protein binding"/>
    <property type="evidence" value="ECO:0007669"/>
    <property type="project" value="Ensembl"/>
</dbReference>
<dbReference type="GO" id="GO:0044877">
    <property type="term" value="F:protein-containing complex binding"/>
    <property type="evidence" value="ECO:0007669"/>
    <property type="project" value="Ensembl"/>
</dbReference>
<dbReference type="GO" id="GO:0051087">
    <property type="term" value="F:protein-folding chaperone binding"/>
    <property type="evidence" value="ECO:0007669"/>
    <property type="project" value="Ensembl"/>
</dbReference>
<dbReference type="GO" id="GO:0003713">
    <property type="term" value="F:transcription coactivator activity"/>
    <property type="evidence" value="ECO:0000250"/>
    <property type="project" value="UniProtKB"/>
</dbReference>
<dbReference type="GO" id="GO:0043130">
    <property type="term" value="F:ubiquitin binding"/>
    <property type="evidence" value="ECO:0007669"/>
    <property type="project" value="Ensembl"/>
</dbReference>
<dbReference type="GO" id="GO:0004842">
    <property type="term" value="F:ubiquitin-protein transferase activity"/>
    <property type="evidence" value="ECO:0000316"/>
    <property type="project" value="MGI"/>
</dbReference>
<dbReference type="GO" id="GO:0008270">
    <property type="term" value="F:zinc ion binding"/>
    <property type="evidence" value="ECO:0000250"/>
    <property type="project" value="UniProtKB"/>
</dbReference>
<dbReference type="GO" id="GO:0006915">
    <property type="term" value="P:apoptotic process"/>
    <property type="evidence" value="ECO:0007669"/>
    <property type="project" value="UniProtKB-KW"/>
</dbReference>
<dbReference type="GO" id="GO:0071356">
    <property type="term" value="P:cellular response to tumor necrosis factor"/>
    <property type="evidence" value="ECO:0000316"/>
    <property type="project" value="MGI"/>
</dbReference>
<dbReference type="GO" id="GO:0070266">
    <property type="term" value="P:necroptotic process"/>
    <property type="evidence" value="ECO:0000315"/>
    <property type="project" value="UniProtKB"/>
</dbReference>
<dbReference type="GO" id="GO:0043066">
    <property type="term" value="P:negative regulation of apoptotic process"/>
    <property type="evidence" value="ECO:0007669"/>
    <property type="project" value="Ensembl"/>
</dbReference>
<dbReference type="GO" id="GO:0060546">
    <property type="term" value="P:negative regulation of necroptotic process"/>
    <property type="evidence" value="ECO:0000316"/>
    <property type="project" value="MGI"/>
</dbReference>
<dbReference type="GO" id="GO:1902443">
    <property type="term" value="P:negative regulation of ripoptosome assembly involved in necroptotic process"/>
    <property type="evidence" value="ECO:0000316"/>
    <property type="project" value="MGI"/>
</dbReference>
<dbReference type="GO" id="GO:0001890">
    <property type="term" value="P:placenta development"/>
    <property type="evidence" value="ECO:0000315"/>
    <property type="project" value="MGI"/>
</dbReference>
<dbReference type="GO" id="GO:0043123">
    <property type="term" value="P:positive regulation of canonical NF-kappaB signal transduction"/>
    <property type="evidence" value="ECO:0000316"/>
    <property type="project" value="MGI"/>
</dbReference>
<dbReference type="GO" id="GO:1902524">
    <property type="term" value="P:positive regulation of protein K48-linked ubiquitination"/>
    <property type="evidence" value="ECO:0000250"/>
    <property type="project" value="UniProtKB"/>
</dbReference>
<dbReference type="GO" id="GO:1902523">
    <property type="term" value="P:positive regulation of protein K63-linked ubiquitination"/>
    <property type="evidence" value="ECO:0000250"/>
    <property type="project" value="UniProtKB"/>
</dbReference>
<dbReference type="GO" id="GO:1902527">
    <property type="term" value="P:positive regulation of protein monoubiquitination"/>
    <property type="evidence" value="ECO:0007669"/>
    <property type="project" value="Ensembl"/>
</dbReference>
<dbReference type="GO" id="GO:1902916">
    <property type="term" value="P:positive regulation of protein polyubiquitination"/>
    <property type="evidence" value="ECO:0000316"/>
    <property type="project" value="MGI"/>
</dbReference>
<dbReference type="GO" id="GO:0043161">
    <property type="term" value="P:proteasome-mediated ubiquitin-dependent protein catabolic process"/>
    <property type="evidence" value="ECO:0000250"/>
    <property type="project" value="UniProtKB"/>
</dbReference>
<dbReference type="GO" id="GO:0000209">
    <property type="term" value="P:protein polyubiquitination"/>
    <property type="evidence" value="ECO:0000250"/>
    <property type="project" value="UniProtKB"/>
</dbReference>
<dbReference type="GO" id="GO:0051726">
    <property type="term" value="P:regulation of cell cycle"/>
    <property type="evidence" value="ECO:0000250"/>
    <property type="project" value="UniProtKB"/>
</dbReference>
<dbReference type="GO" id="GO:1901222">
    <property type="term" value="P:regulation of non-canonical NF-kappaB signal transduction"/>
    <property type="evidence" value="ECO:0000316"/>
    <property type="project" value="MGI"/>
</dbReference>
<dbReference type="GO" id="GO:2000377">
    <property type="term" value="P:regulation of reactive oxygen species metabolic process"/>
    <property type="evidence" value="ECO:0000315"/>
    <property type="project" value="MGI"/>
</dbReference>
<dbReference type="GO" id="GO:0051591">
    <property type="term" value="P:response to cAMP"/>
    <property type="evidence" value="ECO:0007669"/>
    <property type="project" value="Ensembl"/>
</dbReference>
<dbReference type="GO" id="GO:0045471">
    <property type="term" value="P:response to ethanol"/>
    <property type="evidence" value="ECO:0007669"/>
    <property type="project" value="Ensembl"/>
</dbReference>
<dbReference type="GO" id="GO:0001666">
    <property type="term" value="P:response to hypoxia"/>
    <property type="evidence" value="ECO:0007669"/>
    <property type="project" value="Ensembl"/>
</dbReference>
<dbReference type="GO" id="GO:0033209">
    <property type="term" value="P:tumor necrosis factor-mediated signaling pathway"/>
    <property type="evidence" value="ECO:0000304"/>
    <property type="project" value="MGI"/>
</dbReference>
<dbReference type="CDD" id="cd00022">
    <property type="entry name" value="BIR"/>
    <property type="match status" value="3"/>
</dbReference>
<dbReference type="CDD" id="cd08329">
    <property type="entry name" value="CARD_BIRC2_BIRC3"/>
    <property type="match status" value="1"/>
</dbReference>
<dbReference type="CDD" id="cd16713">
    <property type="entry name" value="RING-HC_BIRC2_3_7"/>
    <property type="match status" value="1"/>
</dbReference>
<dbReference type="CDD" id="cd14394">
    <property type="entry name" value="UBA_BIRC2_3"/>
    <property type="match status" value="1"/>
</dbReference>
<dbReference type="FunFam" id="1.10.1170.10:FF:000006">
    <property type="entry name" value="Baculoviral IAP repeat containing 2"/>
    <property type="match status" value="1"/>
</dbReference>
<dbReference type="FunFam" id="1.10.1170.10:FF:000010">
    <property type="entry name" value="Baculoviral IAP repeat containing 2"/>
    <property type="match status" value="1"/>
</dbReference>
<dbReference type="FunFam" id="3.30.40.10:FF:000184">
    <property type="entry name" value="Baculoviral IAP repeat containing 2"/>
    <property type="match status" value="1"/>
</dbReference>
<dbReference type="FunFam" id="1.10.1170.10:FF:000002">
    <property type="entry name" value="Baculoviral IAP repeat containing 7"/>
    <property type="match status" value="1"/>
</dbReference>
<dbReference type="FunFam" id="1.10.1170.10:FF:000004">
    <property type="entry name" value="Baculoviral IAP repeat-containing protein 2"/>
    <property type="match status" value="1"/>
</dbReference>
<dbReference type="FunFam" id="1.10.533.10:FF:000012">
    <property type="entry name" value="baculoviral IAP repeat-containing protein 2"/>
    <property type="match status" value="1"/>
</dbReference>
<dbReference type="FunFam" id="1.10.8.10:FF:000035">
    <property type="entry name" value="baculoviral IAP repeat-containing protein 2"/>
    <property type="match status" value="1"/>
</dbReference>
<dbReference type="Gene3D" id="1.10.533.10">
    <property type="entry name" value="Death Domain, Fas"/>
    <property type="match status" value="1"/>
</dbReference>
<dbReference type="Gene3D" id="1.10.8.10">
    <property type="entry name" value="DNA helicase RuvA subunit, C-terminal domain"/>
    <property type="match status" value="1"/>
</dbReference>
<dbReference type="Gene3D" id="1.10.1170.10">
    <property type="entry name" value="Inhibitor Of Apoptosis Protein (2mihbC-IAP-1), Chain A"/>
    <property type="match status" value="3"/>
</dbReference>
<dbReference type="InterPro" id="IPR001370">
    <property type="entry name" value="BIR_rpt"/>
</dbReference>
<dbReference type="InterPro" id="IPR048875">
    <property type="entry name" value="BIRC2-3-like_UBA"/>
</dbReference>
<dbReference type="InterPro" id="IPR041933">
    <property type="entry name" value="BIRC2/BIRC3_UBA"/>
</dbReference>
<dbReference type="InterPro" id="IPR001315">
    <property type="entry name" value="CARD"/>
</dbReference>
<dbReference type="InterPro" id="IPR011029">
    <property type="entry name" value="DEATH-like_dom_sf"/>
</dbReference>
<dbReference type="InterPro" id="IPR050784">
    <property type="entry name" value="IAP"/>
</dbReference>
<dbReference type="InterPro" id="IPR001841">
    <property type="entry name" value="Znf_RING"/>
</dbReference>
<dbReference type="PANTHER" id="PTHR10044:SF79">
    <property type="entry name" value="BACULOVIRAL IAP REPEAT-CONTAINING PROTEIN 2"/>
    <property type="match status" value="1"/>
</dbReference>
<dbReference type="PANTHER" id="PTHR10044">
    <property type="entry name" value="INHIBITOR OF APOPTOSIS"/>
    <property type="match status" value="1"/>
</dbReference>
<dbReference type="Pfam" id="PF00653">
    <property type="entry name" value="BIR"/>
    <property type="match status" value="3"/>
</dbReference>
<dbReference type="Pfam" id="PF00619">
    <property type="entry name" value="CARD"/>
    <property type="match status" value="1"/>
</dbReference>
<dbReference type="Pfam" id="PF21290">
    <property type="entry name" value="UBA_BIRC2-3"/>
    <property type="match status" value="1"/>
</dbReference>
<dbReference type="Pfam" id="PF13920">
    <property type="entry name" value="zf-C3HC4_3"/>
    <property type="match status" value="1"/>
</dbReference>
<dbReference type="SMART" id="SM00238">
    <property type="entry name" value="BIR"/>
    <property type="match status" value="3"/>
</dbReference>
<dbReference type="SMART" id="SM00114">
    <property type="entry name" value="CARD"/>
    <property type="match status" value="1"/>
</dbReference>
<dbReference type="SMART" id="SM00184">
    <property type="entry name" value="RING"/>
    <property type="match status" value="1"/>
</dbReference>
<dbReference type="SUPFAM" id="SSF47986">
    <property type="entry name" value="DEATH domain"/>
    <property type="match status" value="1"/>
</dbReference>
<dbReference type="SUPFAM" id="SSF57924">
    <property type="entry name" value="Inhibitor of apoptosis (IAP) repeat"/>
    <property type="match status" value="3"/>
</dbReference>
<dbReference type="PROSITE" id="PS01282">
    <property type="entry name" value="BIR_REPEAT_1"/>
    <property type="match status" value="3"/>
</dbReference>
<dbReference type="PROSITE" id="PS50143">
    <property type="entry name" value="BIR_REPEAT_2"/>
    <property type="match status" value="3"/>
</dbReference>
<dbReference type="PROSITE" id="PS50209">
    <property type="entry name" value="CARD"/>
    <property type="match status" value="1"/>
</dbReference>
<dbReference type="PROSITE" id="PS50089">
    <property type="entry name" value="ZF_RING_2"/>
    <property type="match status" value="1"/>
</dbReference>
<comment type="function">
    <text evidence="6">Multi-functional protein which regulates not only caspases and apoptosis, but also modulates inflammatory signaling and immunity, mitogenic kinase signaling, and cell proliferation, as well as cell invasion and metastasis. Acts as an E3 ubiquitin-protein ligase regulating NF-kappa-B signaling and regulates both canonical and non-canonical NF-kappa-B signaling by acting in opposite directions: acts as a positive regulator of the canonical pathway and suppresses constitutive activation of non-canonical NF-kappa-B signaling. The target proteins for its E3 ubiquitin-protein ligase activity include: RIPK1, RIPK2, RIPK3, RIPK4, CASP3, CASP7, CASP8, TRAF2, DIABLO/SMAC, MAP3K14/NIK, MAP3K5/ASK1, IKBKG/NEMO, IKBKE and MXD1/MAD1. Can also function as an E3 ubiquitin-protein ligase of the NEDD8 conjugation pathway, targeting effector caspases for neddylation and inactivation. Acts as an important regulator of innate immune signaling via regulation of Toll-like receptors (TLRs), Nodlike receptors (NLRs) and RIG-I like receptors (RLRs), collectively referred to as pattern recognition receptors (PRRs). Protects cells from spontaneous formation of the ripoptosome, a large multi-protein complex that has the capability to kill cancer cells in a caspase-dependent and caspase-independent manner. Suppresses ripoptosome formation by ubiquitinating RIPK1 and CASP8. Can stimulate the transcriptional activity of E2F1. Plays a role in the modulation of the cell cycle.</text>
</comment>
<comment type="catalytic activity">
    <reaction evidence="6">
        <text>S-ubiquitinyl-[E2 ubiquitin-conjugating enzyme]-L-cysteine + [acceptor protein]-L-lysine = [E2 ubiquitin-conjugating enzyme]-L-cysteine + N(6)-ubiquitinyl-[acceptor protein]-L-lysine.</text>
        <dbReference type="EC" id="2.3.2.27"/>
    </reaction>
</comment>
<comment type="activity regulation">
    <text evidence="1">The CARD domain inhibits the activation of E3 ubiquitin ligase activity by preventing RING domain dimerization and E2 ubiquitin donor binding and activation. The CARD domain-mediated autoinhibition of the E3 ubiquitin-protein ligase activity suppresses cell proliferation and migration. USP19 regulates the stability of BIRC2/c-IAP1 by preventing its ubiquitination (By similarity).</text>
</comment>
<comment type="subunit">
    <text evidence="1 2">Interacts with DIABLO/SMAC and with PRSS25; these interactions inhibit apoptotic suppressor activity. Interacts with CASP9. Interacts (via BIR domains) with TRAF2; the interaction is required for IKBKE ubiquitination. Interacts with E2F1, RIPK1, RIPK2, RIPK3, RIPK4, BIRC5/survivin and USP19 (By similarity). Interacts with HSP90AB1 (By similarity). Interacts with several death receptors, inclusing FAS, TNFRSF10A and TNFRSF10B (By similarity). Recruited to TNFRSF10B in the absence of receptor stimulation. When TNFRSF10B is stimulated, further recruited to the receptor and cleaved by caspases. Proteolytic fragments remain associated with TNFRSF10B (By similarity).</text>
</comment>
<comment type="subcellular location">
    <subcellularLocation>
        <location evidence="1">Cytoplasm</location>
    </subcellularLocation>
    <subcellularLocation>
        <location evidence="1">Nucleus</location>
    </subcellularLocation>
    <text evidence="1">Agents that induce either the extrinsic or intrinsic apoptotic pathways promote its redistribution from the nuclear compartment to the cytoplasmic compartment. Associated with the midbody in telophase cells, and found diffusely in the nucleus of interphase cells (By similarity).</text>
</comment>
<comment type="tissue specificity">
    <text>Expressed in heart, brain, spleen, lung, liver, skeletal muscle, kidney and testis.</text>
</comment>
<comment type="domain">
    <text evidence="1">The BIR domains mediate nuclear localization.</text>
</comment>
<comment type="domain">
    <text evidence="1">The CARD domain is necessary to stabilize the protein and inhibit the activation of E3 ubiquitin-protein ligase activity of BIRC2/c-IAP1 by preventing RING domain dimerization and E2 ubiquitin donor binding and activation.</text>
</comment>
<comment type="PTM">
    <text evidence="1">Auto-ubiquitinated and degraded by the proteasome in apoptotic cells.</text>
</comment>
<comment type="PTM">
    <text evidence="2">Upon stimulation of death receptors, including TNFRSF10B, recruited to receptors and cleaved by caspases. Proteolytic fragments remain associated with the receptors. This cleavage presumably inactivates the protein.</text>
</comment>
<comment type="similarity">
    <text evidence="9">Belongs to the IAP family.</text>
</comment>
<keyword id="KW-0010">Activator</keyword>
<keyword id="KW-0053">Apoptosis</keyword>
<keyword id="KW-0963">Cytoplasm</keyword>
<keyword id="KW-0903">Direct protein sequencing</keyword>
<keyword id="KW-0479">Metal-binding</keyword>
<keyword id="KW-0488">Methylation</keyword>
<keyword id="KW-0539">Nucleus</keyword>
<keyword id="KW-0597">Phosphoprotein</keyword>
<keyword id="KW-1185">Reference proteome</keyword>
<keyword id="KW-0677">Repeat</keyword>
<keyword id="KW-0804">Transcription</keyword>
<keyword id="KW-0805">Transcription regulation</keyword>
<keyword id="KW-0808">Transferase</keyword>
<keyword id="KW-0832">Ubl conjugation</keyword>
<keyword id="KW-0833">Ubl conjugation pathway</keyword>
<keyword id="KW-0862">Zinc</keyword>
<keyword id="KW-0863">Zinc-finger</keyword>
<evidence type="ECO:0000250" key="1"/>
<evidence type="ECO:0000250" key="2">
    <source>
        <dbReference type="UniProtKB" id="Q13490"/>
    </source>
</evidence>
<evidence type="ECO:0000255" key="3">
    <source>
        <dbReference type="PROSITE-ProRule" id="PRU00029"/>
    </source>
</evidence>
<evidence type="ECO:0000255" key="4">
    <source>
        <dbReference type="PROSITE-ProRule" id="PRU00046"/>
    </source>
</evidence>
<evidence type="ECO:0000255" key="5">
    <source>
        <dbReference type="PROSITE-ProRule" id="PRU00175"/>
    </source>
</evidence>
<evidence type="ECO:0000269" key="6">
    <source>
    </source>
</evidence>
<evidence type="ECO:0000303" key="7">
    <source>
    </source>
</evidence>
<evidence type="ECO:0000303" key="8">
    <source>
    </source>
</evidence>
<evidence type="ECO:0000305" key="9"/>
<evidence type="ECO:0007744" key="10">
    <source>
    </source>
</evidence>
<evidence type="ECO:0007744" key="11">
    <source>
    </source>
</evidence>
<protein>
    <recommendedName>
        <fullName>Baculoviral IAP repeat-containing protein 2</fullName>
        <ecNumber evidence="6">2.3.2.27</ecNumber>
    </recommendedName>
    <alternativeName>
        <fullName>Cellular inhibitor of apoptosis 1</fullName>
        <shortName evidence="7">C-IAP1</shortName>
    </alternativeName>
    <alternativeName>
        <fullName evidence="8">Inhibitor of apoptosis protein 2</fullName>
        <shortName evidence="8">mIAP2</shortName>
    </alternativeName>
    <alternativeName>
        <fullName evidence="9">RING-type E3 ubiquitin transferase BIRC2</fullName>
    </alternativeName>
</protein>
<proteinExistence type="evidence at protein level"/>
<feature type="chain" id="PRO_0000122348" description="Baculoviral IAP repeat-containing protein 2">
    <location>
        <begin position="1"/>
        <end position="612"/>
    </location>
</feature>
<feature type="repeat" description="BIR 1">
    <location>
        <begin position="46"/>
        <end position="113"/>
    </location>
</feature>
<feature type="repeat" description="BIR 2">
    <location>
        <begin position="177"/>
        <end position="243"/>
    </location>
</feature>
<feature type="repeat" description="BIR 3">
    <location>
        <begin position="262"/>
        <end position="329"/>
    </location>
</feature>
<feature type="domain" description="CARD" evidence="4">
    <location>
        <begin position="447"/>
        <end position="537"/>
    </location>
</feature>
<feature type="zinc finger region" description="RING-type" evidence="5">
    <location>
        <begin position="565"/>
        <end position="600"/>
    </location>
</feature>
<feature type="binding site" evidence="3">
    <location>
        <position position="299"/>
    </location>
    <ligand>
        <name>Zn(2+)</name>
        <dbReference type="ChEBI" id="CHEBI:29105"/>
    </ligand>
</feature>
<feature type="binding site" evidence="3">
    <location>
        <position position="302"/>
    </location>
    <ligand>
        <name>Zn(2+)</name>
        <dbReference type="ChEBI" id="CHEBI:29105"/>
    </ligand>
</feature>
<feature type="binding site" evidence="3">
    <location>
        <position position="319"/>
    </location>
    <ligand>
        <name>Zn(2+)</name>
        <dbReference type="ChEBI" id="CHEBI:29105"/>
    </ligand>
</feature>
<feature type="binding site" evidence="3">
    <location>
        <position position="326"/>
    </location>
    <ligand>
        <name>Zn(2+)</name>
        <dbReference type="ChEBI" id="CHEBI:29105"/>
    </ligand>
</feature>
<feature type="modified residue" description="Omega-N-methylarginine" evidence="11">
    <location>
        <position position="143"/>
    </location>
</feature>
<feature type="modified residue" description="Phosphoserine" evidence="10">
    <location>
        <position position="153"/>
    </location>
</feature>
<feature type="sequence conflict" description="In Ref. 2; AAC53532." evidence="9" ref="2">
    <original>E</original>
    <variation>K</variation>
    <location>
        <position position="380"/>
    </location>
</feature>
<organism>
    <name type="scientific">Mus musculus</name>
    <name type="common">Mouse</name>
    <dbReference type="NCBI Taxonomy" id="10090"/>
    <lineage>
        <taxon>Eukaryota</taxon>
        <taxon>Metazoa</taxon>
        <taxon>Chordata</taxon>
        <taxon>Craniata</taxon>
        <taxon>Vertebrata</taxon>
        <taxon>Euteleostomi</taxon>
        <taxon>Mammalia</taxon>
        <taxon>Eutheria</taxon>
        <taxon>Euarchontoglires</taxon>
        <taxon>Glires</taxon>
        <taxon>Rodentia</taxon>
        <taxon>Myomorpha</taxon>
        <taxon>Muroidea</taxon>
        <taxon>Muridae</taxon>
        <taxon>Murinae</taxon>
        <taxon>Mus</taxon>
        <taxon>Mus</taxon>
    </lineage>
</organism>
<sequence>MDKTVSQRLGQGTLHQKLKRIMEKSTILSNWTKESEEKMKFDFSCELYRMSTYSAFPRGVPVSERSLARAGFYYTGVNDKVKCFCCGLMLDNWKQGDSPVEKHRQFYPSCSFVQTLLSASLQSPSKNMSPVKSRFAHSSPLERGGIHSNLCSSPLNSRAVEDFSSRMDPCSYAMSTEEARFLTYSMWPLSFLSPAELARAGFYYIGPGDRVACFACGGKLSNWEPKDDAMSEHRRHFPHCPFLENTSETQRFSISNLSMQTHSARLRTFLYWPPSVPVQPEQLASAGFYYVDRNDDVKCFCCDGGLRCWEPGDDPWIEHAKWFPRCEFLIRMKGQEFVDEIQARYPHLLEQLLSTSDTPGEENADPTETVVHFGPGESSEDVVMMSTPVVKAALEMGFSRSLVRQTVQRQILATGENYRTVNDIVSVLLNAEDERREEEKERQTEEMASGDLSLIRKNRMALFQQLTHVLPILDNLLEASVITKQEHDIIRQKTQIPLQARELIDTVLVKGNAAANIFKNSLKEIDSTLYENLFVEKNMKYIPTEDVSGLSLEEQLRRLQEERTCKVCMDREVSIVFIPCGHLVVCQECAPSLRKCPICRGTIKGTVRTFLS</sequence>
<reference key="1">
    <citation type="journal article" date="1995" name="Cell">
        <title>The TNFR2-TRAF signaling complex contains two novel proteins related to baculoviral inhibitor of apoptosis proteins.</title>
        <authorList>
            <person name="Rothe M."/>
            <person name="Pan M.-G."/>
            <person name="Henzel W.J."/>
            <person name="Ayres T.M."/>
            <person name="Goeddel D.V."/>
        </authorList>
    </citation>
    <scope>NUCLEOTIDE SEQUENCE [MRNA]</scope>
    <scope>PARTIAL PROTEIN SEQUENCE</scope>
</reference>
<reference key="2">
    <citation type="journal article" date="1997" name="Genomics">
        <title>Genomic characterization of the mouse inhibitor of apoptosis protein 1 and 2 genes.</title>
        <authorList>
            <person name="Liston P."/>
            <person name="Lefebvre C."/>
            <person name="Fong W.G."/>
            <person name="Xuan J.Y."/>
            <person name="Korneluk R.G."/>
        </authorList>
    </citation>
    <scope>NUCLEOTIDE SEQUENCE [MRNA]</scope>
    <source>
        <tissue>Skeletal muscle</tissue>
    </source>
</reference>
<reference key="3">
    <citation type="journal article" date="2004" name="Genome Res.">
        <title>The status, quality, and expansion of the NIH full-length cDNA project: the Mammalian Gene Collection (MGC).</title>
        <authorList>
            <consortium name="The MGC Project Team"/>
        </authorList>
    </citation>
    <scope>NUCLEOTIDE SEQUENCE [LARGE SCALE MRNA]</scope>
    <source>
        <tissue>Brain</tissue>
    </source>
</reference>
<reference key="4">
    <citation type="journal article" date="2008" name="J. Biol. Chem.">
        <title>c-IAP1 and c-IAP2 are critical mediators of tumor necrosis factor alpha (TNFalpha)-induced NF-kappaB activation.</title>
        <authorList>
            <person name="Varfolomeev E."/>
            <person name="Goncharov T."/>
            <person name="Fedorova A.V."/>
            <person name="Dynek J.N."/>
            <person name="Zobel K."/>
            <person name="Deshayes K."/>
            <person name="Fairbrother W.J."/>
            <person name="Vucic D."/>
        </authorList>
    </citation>
    <scope>FUNCTION AS AN E3 UBIQUITIN-PROTEIN LIGASE</scope>
    <scope>CATALYTIC ACTIVITY</scope>
</reference>
<reference key="5">
    <citation type="journal article" date="2010" name="Cell">
        <title>A tissue-specific atlas of mouse protein phosphorylation and expression.</title>
        <authorList>
            <person name="Huttlin E.L."/>
            <person name="Jedrychowski M.P."/>
            <person name="Elias J.E."/>
            <person name="Goswami T."/>
            <person name="Rad R."/>
            <person name="Beausoleil S.A."/>
            <person name="Villen J."/>
            <person name="Haas W."/>
            <person name="Sowa M.E."/>
            <person name="Gygi S.P."/>
        </authorList>
    </citation>
    <scope>PHOSPHORYLATION [LARGE SCALE ANALYSIS] AT SER-153</scope>
    <scope>IDENTIFICATION BY MASS SPECTROMETRY [LARGE SCALE ANALYSIS]</scope>
    <source>
        <tissue>Spleen</tissue>
        <tissue>Testis</tissue>
    </source>
</reference>
<reference key="6">
    <citation type="journal article" date="2014" name="Mol. Cell. Proteomics">
        <title>Immunoaffinity enrichment and mass spectrometry analysis of protein methylation.</title>
        <authorList>
            <person name="Guo A."/>
            <person name="Gu H."/>
            <person name="Zhou J."/>
            <person name="Mulhern D."/>
            <person name="Wang Y."/>
            <person name="Lee K.A."/>
            <person name="Yang V."/>
            <person name="Aguiar M."/>
            <person name="Kornhauser J."/>
            <person name="Jia X."/>
            <person name="Ren J."/>
            <person name="Beausoleil S.A."/>
            <person name="Silva J.C."/>
            <person name="Vemulapalli V."/>
            <person name="Bedford M.T."/>
            <person name="Comb M.J."/>
        </authorList>
    </citation>
    <scope>METHYLATION [LARGE SCALE ANALYSIS] AT ARG-143</scope>
    <scope>IDENTIFICATION BY MASS SPECTROMETRY [LARGE SCALE ANALYSIS]</scope>
    <source>
        <tissue>Brain</tissue>
    </source>
</reference>
<name>BIRC2_MOUSE</name>
<accession>Q62210</accession>
<accession>A6H6S7</accession>
<accession>O08864</accession>
<gene>
    <name type="primary">Birc2</name>
</gene>